<dbReference type="EC" id="3.4.16.6"/>
<dbReference type="EMBL" id="CH476636">
    <property type="protein sequence ID" value="EDN94679.1"/>
    <property type="molecule type" value="Genomic_DNA"/>
</dbReference>
<dbReference type="RefSeq" id="XP_001588107.1">
    <property type="nucleotide sequence ID" value="XM_001588057.1"/>
</dbReference>
<dbReference type="SMR" id="A7EYY7"/>
<dbReference type="FunCoup" id="A7EYY7">
    <property type="interactions" value="101"/>
</dbReference>
<dbReference type="STRING" id="665079.A7EYY7"/>
<dbReference type="ESTHER" id="scls1-kex1">
    <property type="family name" value="Carboxypeptidase_S10"/>
</dbReference>
<dbReference type="MEROPS" id="S10.007"/>
<dbReference type="GlyCosmos" id="A7EYY7">
    <property type="glycosylation" value="3 sites, No reported glycans"/>
</dbReference>
<dbReference type="GeneID" id="5484474"/>
<dbReference type="KEGG" id="ssl:SS1G_10553"/>
<dbReference type="VEuPathDB" id="FungiDB:sscle_09g071760"/>
<dbReference type="InParanoid" id="A7EYY7"/>
<dbReference type="OMA" id="EMADQFV"/>
<dbReference type="OrthoDB" id="443318at2759"/>
<dbReference type="Proteomes" id="UP000001312">
    <property type="component" value="Unassembled WGS sequence"/>
</dbReference>
<dbReference type="GO" id="GO:0016020">
    <property type="term" value="C:membrane"/>
    <property type="evidence" value="ECO:0007669"/>
    <property type="project" value="UniProtKB-KW"/>
</dbReference>
<dbReference type="GO" id="GO:0005802">
    <property type="term" value="C:trans-Golgi network"/>
    <property type="evidence" value="ECO:0000318"/>
    <property type="project" value="GO_Central"/>
</dbReference>
<dbReference type="GO" id="GO:0004185">
    <property type="term" value="F:serine-type carboxypeptidase activity"/>
    <property type="evidence" value="ECO:0000318"/>
    <property type="project" value="GO_Central"/>
</dbReference>
<dbReference type="GO" id="GO:0006915">
    <property type="term" value="P:apoptotic process"/>
    <property type="evidence" value="ECO:0007669"/>
    <property type="project" value="UniProtKB-KW"/>
</dbReference>
<dbReference type="GO" id="GO:0006508">
    <property type="term" value="P:proteolysis"/>
    <property type="evidence" value="ECO:0007669"/>
    <property type="project" value="UniProtKB-KW"/>
</dbReference>
<dbReference type="FunFam" id="3.40.50.1820:FF:000121">
    <property type="entry name" value="Carboxypeptidase D"/>
    <property type="match status" value="1"/>
</dbReference>
<dbReference type="Gene3D" id="3.40.50.1820">
    <property type="entry name" value="alpha/beta hydrolase"/>
    <property type="match status" value="1"/>
</dbReference>
<dbReference type="InterPro" id="IPR029058">
    <property type="entry name" value="AB_hydrolase_fold"/>
</dbReference>
<dbReference type="InterPro" id="IPR001563">
    <property type="entry name" value="Peptidase_S10"/>
</dbReference>
<dbReference type="InterPro" id="IPR018202">
    <property type="entry name" value="Ser_caboxypep_ser_AS"/>
</dbReference>
<dbReference type="PANTHER" id="PTHR11802:SF190">
    <property type="entry name" value="PHEROMONE-PROCESSING CARBOXYPEPTIDASE KEX1"/>
    <property type="match status" value="1"/>
</dbReference>
<dbReference type="PANTHER" id="PTHR11802">
    <property type="entry name" value="SERINE PROTEASE FAMILY S10 SERINE CARBOXYPEPTIDASE"/>
    <property type="match status" value="1"/>
</dbReference>
<dbReference type="Pfam" id="PF00450">
    <property type="entry name" value="Peptidase_S10"/>
    <property type="match status" value="1"/>
</dbReference>
<dbReference type="PRINTS" id="PR00724">
    <property type="entry name" value="CRBOXYPTASEC"/>
</dbReference>
<dbReference type="SUPFAM" id="SSF53474">
    <property type="entry name" value="alpha/beta-Hydrolases"/>
    <property type="match status" value="1"/>
</dbReference>
<dbReference type="PROSITE" id="PS00131">
    <property type="entry name" value="CARBOXYPEPT_SER_SER"/>
    <property type="match status" value="1"/>
</dbReference>
<keyword id="KW-0053">Apoptosis</keyword>
<keyword id="KW-0121">Carboxypeptidase</keyword>
<keyword id="KW-0325">Glycoprotein</keyword>
<keyword id="KW-0333">Golgi apparatus</keyword>
<keyword id="KW-0378">Hydrolase</keyword>
<keyword id="KW-0472">Membrane</keyword>
<keyword id="KW-0645">Protease</keyword>
<keyword id="KW-1185">Reference proteome</keyword>
<keyword id="KW-0732">Signal</keyword>
<keyword id="KW-0812">Transmembrane</keyword>
<keyword id="KW-1133">Transmembrane helix</keyword>
<gene>
    <name type="primary">kex1</name>
    <name type="ORF">SS1G_10553</name>
</gene>
<reference key="1">
    <citation type="journal article" date="2011" name="PLoS Genet.">
        <title>Genomic analysis of the necrotrophic fungal pathogens Sclerotinia sclerotiorum and Botrytis cinerea.</title>
        <authorList>
            <person name="Amselem J."/>
            <person name="Cuomo C.A."/>
            <person name="van Kan J.A.L."/>
            <person name="Viaud M."/>
            <person name="Benito E.P."/>
            <person name="Couloux A."/>
            <person name="Coutinho P.M."/>
            <person name="de Vries R.P."/>
            <person name="Dyer P.S."/>
            <person name="Fillinger S."/>
            <person name="Fournier E."/>
            <person name="Gout L."/>
            <person name="Hahn M."/>
            <person name="Kohn L."/>
            <person name="Lapalu N."/>
            <person name="Plummer K.M."/>
            <person name="Pradier J.-M."/>
            <person name="Quevillon E."/>
            <person name="Sharon A."/>
            <person name="Simon A."/>
            <person name="ten Have A."/>
            <person name="Tudzynski B."/>
            <person name="Tudzynski P."/>
            <person name="Wincker P."/>
            <person name="Andrew M."/>
            <person name="Anthouard V."/>
            <person name="Beever R.E."/>
            <person name="Beffa R."/>
            <person name="Benoit I."/>
            <person name="Bouzid O."/>
            <person name="Brault B."/>
            <person name="Chen Z."/>
            <person name="Choquer M."/>
            <person name="Collemare J."/>
            <person name="Cotton P."/>
            <person name="Danchin E.G."/>
            <person name="Da Silva C."/>
            <person name="Gautier A."/>
            <person name="Giraud C."/>
            <person name="Giraud T."/>
            <person name="Gonzalez C."/>
            <person name="Grossetete S."/>
            <person name="Gueldener U."/>
            <person name="Henrissat B."/>
            <person name="Howlett B.J."/>
            <person name="Kodira C."/>
            <person name="Kretschmer M."/>
            <person name="Lappartient A."/>
            <person name="Leroch M."/>
            <person name="Levis C."/>
            <person name="Mauceli E."/>
            <person name="Neuveglise C."/>
            <person name="Oeser B."/>
            <person name="Pearson M."/>
            <person name="Poulain J."/>
            <person name="Poussereau N."/>
            <person name="Quesneville H."/>
            <person name="Rascle C."/>
            <person name="Schumacher J."/>
            <person name="Segurens B."/>
            <person name="Sexton A."/>
            <person name="Silva E."/>
            <person name="Sirven C."/>
            <person name="Soanes D.M."/>
            <person name="Talbot N.J."/>
            <person name="Templeton M."/>
            <person name="Yandava C."/>
            <person name="Yarden O."/>
            <person name="Zeng Q."/>
            <person name="Rollins J.A."/>
            <person name="Lebrun M.-H."/>
            <person name="Dickman M."/>
        </authorList>
    </citation>
    <scope>NUCLEOTIDE SEQUENCE [LARGE SCALE GENOMIC DNA]</scope>
    <source>
        <strain>ATCC 18683 / 1980 / Ss-1</strain>
    </source>
</reference>
<proteinExistence type="inferred from homology"/>
<accession>A7EYY7</accession>
<comment type="function">
    <text evidence="1">Protease with a carboxypeptidase B-like function involved in the C-terminal processing of the lysine and arginine residues from protein precursors. Promotes cell fusion and is involved in the programmed cell death (By similarity).</text>
</comment>
<comment type="catalytic activity">
    <reaction>
        <text>Preferential release of a C-terminal arginine or lysine residue.</text>
        <dbReference type="EC" id="3.4.16.6"/>
    </reaction>
</comment>
<comment type="subcellular location">
    <subcellularLocation>
        <location evidence="1">Golgi apparatus</location>
        <location evidence="1">trans-Golgi network membrane</location>
        <topology evidence="1">Single-pass type I membrane protein</topology>
    </subcellularLocation>
</comment>
<comment type="similarity">
    <text evidence="5">Belongs to the peptidase S10 family.</text>
</comment>
<sequence>MRSLTTKTSSALLTVWGLLSVSLMPSVGQADKTAGDYFVHSLPGAPAGPLLKMHAGHIEVTPEHHGNIFFWHFQNRHIANKQRTVIWLNGGPGCSSEDGALMEIGPYRVKDGSNGPKLEYNPGSWDEFANVMFVDNPVGTGFSFVDSDSYIHDLPEMADQFVQFLEKWFALFPEYEHDDLYLAGESYAGQHIPYITKAILERNKKPDAKHKWPVKGMLIGNGWISPVEQYMSYLPFAYEKGLVKKDSEKAKKLESQQAICTKMLNENGGRDKVDNSQCEQILQEILSTTQSKGSDGNMQCYNMYDVRLKDSYPSCGMNWPPDLVNVTPYLRRSDVVAALHISPEKRTGWTECNGAVGSAFRAANSKPSIQILPELLAEVPTILFSGAEDLICNHIGTEELISNMEWNGGKGFELGSGTWAPRRDWEFEGEPAGFWQEARNLTYVLFYNSSHMVPFDYARRTRDMLDRFMKVDIASIGGAPTDSRIDGEKGLETSVGGHPNSTAAAEAEEERLEAAKWNAYYKSGEIVLVIVVIAASAWGYYIWRERRQRAGYAGIFGGDTPMALAGARSGSRGAAGLEDFRNKRNARDVEAADFDESELDELHVRSPTDDMDRDRYSVGSASDDESIGKRNGNGKGKEKSYS</sequence>
<evidence type="ECO:0000250" key="1"/>
<evidence type="ECO:0000255" key="2"/>
<evidence type="ECO:0000255" key="3">
    <source>
        <dbReference type="PROSITE-ProRule" id="PRU10074"/>
    </source>
</evidence>
<evidence type="ECO:0000256" key="4">
    <source>
        <dbReference type="SAM" id="MobiDB-lite"/>
    </source>
</evidence>
<evidence type="ECO:0000305" key="5"/>
<feature type="signal peptide" evidence="2">
    <location>
        <begin position="1"/>
        <end position="30"/>
    </location>
</feature>
<feature type="chain" id="PRO_0000411945" description="Pheromone-processing carboxypeptidase kex1">
    <location>
        <begin position="31"/>
        <end position="642"/>
    </location>
</feature>
<feature type="topological domain" description="Lumenal" evidence="2">
    <location>
        <begin position="31"/>
        <end position="522"/>
    </location>
</feature>
<feature type="transmembrane region" description="Helical" evidence="2">
    <location>
        <begin position="523"/>
        <end position="543"/>
    </location>
</feature>
<feature type="topological domain" description="Cytoplasmic" evidence="2">
    <location>
        <begin position="544"/>
        <end position="642"/>
    </location>
</feature>
<feature type="region of interest" description="Disordered" evidence="4">
    <location>
        <begin position="480"/>
        <end position="505"/>
    </location>
</feature>
<feature type="region of interest" description="Disordered" evidence="4">
    <location>
        <begin position="598"/>
        <end position="642"/>
    </location>
</feature>
<feature type="compositionally biased region" description="Basic and acidic residues" evidence="4">
    <location>
        <begin position="600"/>
        <end position="616"/>
    </location>
</feature>
<feature type="active site" evidence="3">
    <location>
        <position position="186"/>
    </location>
</feature>
<feature type="active site" evidence="3">
    <location>
        <position position="389"/>
    </location>
</feature>
<feature type="active site" evidence="3">
    <location>
        <position position="451"/>
    </location>
</feature>
<feature type="glycosylation site" description="N-linked (GlcNAc...) asparagine" evidence="2">
    <location>
        <position position="440"/>
    </location>
</feature>
<feature type="glycosylation site" description="N-linked (GlcNAc...) asparagine" evidence="2">
    <location>
        <position position="448"/>
    </location>
</feature>
<feature type="glycosylation site" description="N-linked (GlcNAc...) asparagine" evidence="2">
    <location>
        <position position="500"/>
    </location>
</feature>
<name>KEX1_SCLS1</name>
<organism>
    <name type="scientific">Sclerotinia sclerotiorum (strain ATCC 18683 / 1980 / Ss-1)</name>
    <name type="common">White mold</name>
    <name type="synonym">Whetzelinia sclerotiorum</name>
    <dbReference type="NCBI Taxonomy" id="665079"/>
    <lineage>
        <taxon>Eukaryota</taxon>
        <taxon>Fungi</taxon>
        <taxon>Dikarya</taxon>
        <taxon>Ascomycota</taxon>
        <taxon>Pezizomycotina</taxon>
        <taxon>Leotiomycetes</taxon>
        <taxon>Helotiales</taxon>
        <taxon>Sclerotiniaceae</taxon>
        <taxon>Sclerotinia</taxon>
    </lineage>
</organism>
<protein>
    <recommendedName>
        <fullName>Pheromone-processing carboxypeptidase kex1</fullName>
        <ecNumber>3.4.16.6</ecNumber>
    </recommendedName>
    <alternativeName>
        <fullName>Carboxypeptidase D</fullName>
    </alternativeName>
</protein>